<reference key="1">
    <citation type="submission" date="2008-10" db="EMBL/GenBank/DDBJ databases">
        <title>Genome sequence of Bacillus cereus G9842.</title>
        <authorList>
            <person name="Dodson R.J."/>
            <person name="Durkin A.S."/>
            <person name="Rosovitz M.J."/>
            <person name="Rasko D.A."/>
            <person name="Hoffmaster A."/>
            <person name="Ravel J."/>
            <person name="Sutton G."/>
        </authorList>
    </citation>
    <scope>NUCLEOTIDE SEQUENCE [LARGE SCALE GENOMIC DNA]</scope>
    <source>
        <strain>G9842</strain>
    </source>
</reference>
<organism>
    <name type="scientific">Bacillus cereus (strain G9842)</name>
    <dbReference type="NCBI Taxonomy" id="405531"/>
    <lineage>
        <taxon>Bacteria</taxon>
        <taxon>Bacillati</taxon>
        <taxon>Bacillota</taxon>
        <taxon>Bacilli</taxon>
        <taxon>Bacillales</taxon>
        <taxon>Bacillaceae</taxon>
        <taxon>Bacillus</taxon>
        <taxon>Bacillus cereus group</taxon>
    </lineage>
</organism>
<name>LEUC_BACC2</name>
<sequence>MGKRLLDKLWERHVVATNENGLDLLYIDLHLVHEVTSPQAFEGLRLTNRRVRRPDLTFATMDHNIPTKDVWNITDRIAKQQLDTLRENCKQFQVPLADIGDEEQGIVHVIGPELGLTQPGKTIVCGDSHTATHGAFGALAFGIGTSEVEHVLATQTLWQRKPKAMGIELKGKLPQGVYAKDIILHLLSKYGVAVGTGYVMEFYGETIHAMDMEERMTLCNMAIEGGAKAGIIAPDEKTVAYVKGRKYAPKDYESIKKKWSELYTDLDAVYDLHISVDVTDLAPYVTWGTNPSMGVRIDEKLPEKYDANDERAFSYMGLSPGQSTYDIPVQHVFIGSCTNSRLSDLEIAASVVKGKKVKEGVRALVVPGSQRVREAAMHKGLHRIFEEAGFEWREPGCSMCLGMNPDQVPEGEHCASTSNRNFEGRQGKGARTHLVSPAMAAAAALYGHFVDIRKESYDGAISYS</sequence>
<gene>
    <name evidence="1" type="primary">leuC</name>
    <name type="ordered locus">BCG9842_B3889</name>
</gene>
<keyword id="KW-0004">4Fe-4S</keyword>
<keyword id="KW-0028">Amino-acid biosynthesis</keyword>
<keyword id="KW-0100">Branched-chain amino acid biosynthesis</keyword>
<keyword id="KW-0408">Iron</keyword>
<keyword id="KW-0411">Iron-sulfur</keyword>
<keyword id="KW-0432">Leucine biosynthesis</keyword>
<keyword id="KW-0456">Lyase</keyword>
<keyword id="KW-0479">Metal-binding</keyword>
<comment type="function">
    <text evidence="1">Catalyzes the isomerization between 2-isopropylmalate and 3-isopropylmalate, via the formation of 2-isopropylmaleate.</text>
</comment>
<comment type="catalytic activity">
    <reaction evidence="1">
        <text>(2R,3S)-3-isopropylmalate = (2S)-2-isopropylmalate</text>
        <dbReference type="Rhea" id="RHEA:32287"/>
        <dbReference type="ChEBI" id="CHEBI:1178"/>
        <dbReference type="ChEBI" id="CHEBI:35121"/>
        <dbReference type="EC" id="4.2.1.33"/>
    </reaction>
</comment>
<comment type="cofactor">
    <cofactor evidence="1">
        <name>[4Fe-4S] cluster</name>
        <dbReference type="ChEBI" id="CHEBI:49883"/>
    </cofactor>
    <text evidence="1">Binds 1 [4Fe-4S] cluster per subunit.</text>
</comment>
<comment type="pathway">
    <text evidence="1">Amino-acid biosynthesis; L-leucine biosynthesis; L-leucine from 3-methyl-2-oxobutanoate: step 2/4.</text>
</comment>
<comment type="subunit">
    <text evidence="1">Heterodimer of LeuC and LeuD.</text>
</comment>
<comment type="similarity">
    <text evidence="1">Belongs to the aconitase/IPM isomerase family. LeuC type 1 subfamily.</text>
</comment>
<protein>
    <recommendedName>
        <fullName evidence="1">3-isopropylmalate dehydratase large subunit</fullName>
        <ecNumber evidence="1">4.2.1.33</ecNumber>
    </recommendedName>
    <alternativeName>
        <fullName evidence="1">Alpha-IPM isomerase</fullName>
        <shortName evidence="1">IPMI</shortName>
    </alternativeName>
    <alternativeName>
        <fullName evidence="1">Isopropylmalate isomerase</fullName>
    </alternativeName>
</protein>
<feature type="chain" id="PRO_1000135667" description="3-isopropylmalate dehydratase large subunit">
    <location>
        <begin position="1"/>
        <end position="464"/>
    </location>
</feature>
<feature type="binding site" evidence="1">
    <location>
        <position position="337"/>
    </location>
    <ligand>
        <name>[4Fe-4S] cluster</name>
        <dbReference type="ChEBI" id="CHEBI:49883"/>
    </ligand>
</feature>
<feature type="binding site" evidence="1">
    <location>
        <position position="397"/>
    </location>
    <ligand>
        <name>[4Fe-4S] cluster</name>
        <dbReference type="ChEBI" id="CHEBI:49883"/>
    </ligand>
</feature>
<feature type="binding site" evidence="1">
    <location>
        <position position="400"/>
    </location>
    <ligand>
        <name>[4Fe-4S] cluster</name>
        <dbReference type="ChEBI" id="CHEBI:49883"/>
    </ligand>
</feature>
<accession>B7IN95</accession>
<dbReference type="EC" id="4.2.1.33" evidence="1"/>
<dbReference type="EMBL" id="CP001186">
    <property type="protein sequence ID" value="ACK96171.1"/>
    <property type="molecule type" value="Genomic_DNA"/>
</dbReference>
<dbReference type="RefSeq" id="WP_000518094.1">
    <property type="nucleotide sequence ID" value="NC_011772.1"/>
</dbReference>
<dbReference type="SMR" id="B7IN95"/>
<dbReference type="KEGG" id="bcg:BCG9842_B3889"/>
<dbReference type="HOGENOM" id="CLU_006714_3_4_9"/>
<dbReference type="UniPathway" id="UPA00048">
    <property type="reaction ID" value="UER00071"/>
</dbReference>
<dbReference type="Proteomes" id="UP000006744">
    <property type="component" value="Chromosome"/>
</dbReference>
<dbReference type="GO" id="GO:0003861">
    <property type="term" value="F:3-isopropylmalate dehydratase activity"/>
    <property type="evidence" value="ECO:0007669"/>
    <property type="project" value="UniProtKB-UniRule"/>
</dbReference>
<dbReference type="GO" id="GO:0051539">
    <property type="term" value="F:4 iron, 4 sulfur cluster binding"/>
    <property type="evidence" value="ECO:0007669"/>
    <property type="project" value="UniProtKB-KW"/>
</dbReference>
<dbReference type="GO" id="GO:0046872">
    <property type="term" value="F:metal ion binding"/>
    <property type="evidence" value="ECO:0007669"/>
    <property type="project" value="UniProtKB-KW"/>
</dbReference>
<dbReference type="GO" id="GO:0009098">
    <property type="term" value="P:L-leucine biosynthetic process"/>
    <property type="evidence" value="ECO:0007669"/>
    <property type="project" value="UniProtKB-UniRule"/>
</dbReference>
<dbReference type="CDD" id="cd01583">
    <property type="entry name" value="IPMI"/>
    <property type="match status" value="1"/>
</dbReference>
<dbReference type="FunFam" id="3.30.499.10:FF:000007">
    <property type="entry name" value="3-isopropylmalate dehydratase large subunit"/>
    <property type="match status" value="1"/>
</dbReference>
<dbReference type="Gene3D" id="3.30.499.10">
    <property type="entry name" value="Aconitase, domain 3"/>
    <property type="match status" value="2"/>
</dbReference>
<dbReference type="HAMAP" id="MF_01026">
    <property type="entry name" value="LeuC_type1"/>
    <property type="match status" value="1"/>
</dbReference>
<dbReference type="InterPro" id="IPR004430">
    <property type="entry name" value="3-IsopropMal_deHydase_lsu"/>
</dbReference>
<dbReference type="InterPro" id="IPR015931">
    <property type="entry name" value="Acnase/IPM_dHydase_lsu_aba_1/3"/>
</dbReference>
<dbReference type="InterPro" id="IPR001030">
    <property type="entry name" value="Acoase/IPM_deHydtase_lsu_aba"/>
</dbReference>
<dbReference type="InterPro" id="IPR018136">
    <property type="entry name" value="Aconitase_4Fe-4S_BS"/>
</dbReference>
<dbReference type="InterPro" id="IPR036008">
    <property type="entry name" value="Aconitase_4Fe-4S_dom"/>
</dbReference>
<dbReference type="InterPro" id="IPR050067">
    <property type="entry name" value="IPM_dehydratase_rel_enz"/>
</dbReference>
<dbReference type="InterPro" id="IPR033941">
    <property type="entry name" value="IPMI_cat"/>
</dbReference>
<dbReference type="NCBIfam" id="TIGR00170">
    <property type="entry name" value="leuC"/>
    <property type="match status" value="1"/>
</dbReference>
<dbReference type="NCBIfam" id="NF004016">
    <property type="entry name" value="PRK05478.1"/>
    <property type="match status" value="1"/>
</dbReference>
<dbReference type="NCBIfam" id="NF009116">
    <property type="entry name" value="PRK12466.1"/>
    <property type="match status" value="1"/>
</dbReference>
<dbReference type="PANTHER" id="PTHR43822:SF9">
    <property type="entry name" value="3-ISOPROPYLMALATE DEHYDRATASE"/>
    <property type="match status" value="1"/>
</dbReference>
<dbReference type="PANTHER" id="PTHR43822">
    <property type="entry name" value="HOMOACONITASE, MITOCHONDRIAL-RELATED"/>
    <property type="match status" value="1"/>
</dbReference>
<dbReference type="Pfam" id="PF00330">
    <property type="entry name" value="Aconitase"/>
    <property type="match status" value="1"/>
</dbReference>
<dbReference type="PRINTS" id="PR00415">
    <property type="entry name" value="ACONITASE"/>
</dbReference>
<dbReference type="SUPFAM" id="SSF53732">
    <property type="entry name" value="Aconitase iron-sulfur domain"/>
    <property type="match status" value="1"/>
</dbReference>
<dbReference type="PROSITE" id="PS00450">
    <property type="entry name" value="ACONITASE_1"/>
    <property type="match status" value="1"/>
</dbReference>
<dbReference type="PROSITE" id="PS01244">
    <property type="entry name" value="ACONITASE_2"/>
    <property type="match status" value="1"/>
</dbReference>
<evidence type="ECO:0000255" key="1">
    <source>
        <dbReference type="HAMAP-Rule" id="MF_01026"/>
    </source>
</evidence>
<proteinExistence type="inferred from homology"/>